<keyword id="KW-0349">Heme</keyword>
<keyword id="KW-0408">Iron</keyword>
<keyword id="KW-0472">Membrane</keyword>
<keyword id="KW-0479">Metal-binding</keyword>
<keyword id="KW-0560">Oxidoreductase</keyword>
<keyword id="KW-0812">Transmembrane</keyword>
<keyword id="KW-1133">Transmembrane helix</keyword>
<feature type="chain" id="PRO_0000451901" description="Pluviatolide synthase">
    <location>
        <begin position="1"/>
        <end position="489"/>
    </location>
</feature>
<feature type="transmembrane region" description="Helical" evidence="2">
    <location>
        <begin position="6"/>
        <end position="26"/>
    </location>
</feature>
<feature type="binding site" description="axial binding residue" evidence="1">
    <location>
        <position position="432"/>
    </location>
    <ligand>
        <name>heme</name>
        <dbReference type="ChEBI" id="CHEBI:30413"/>
    </ligand>
    <ligandPart>
        <name>Fe</name>
        <dbReference type="ChEBI" id="CHEBI:18248"/>
    </ligandPart>
</feature>
<name>C719A_SINHE</name>
<organism>
    <name type="scientific">Sinopodophyllum hexandrum</name>
    <name type="common">Himalayan may apple</name>
    <name type="synonym">Podophyllum hexandrum</name>
    <dbReference type="NCBI Taxonomy" id="93608"/>
    <lineage>
        <taxon>Eukaryota</taxon>
        <taxon>Viridiplantae</taxon>
        <taxon>Streptophyta</taxon>
        <taxon>Embryophyta</taxon>
        <taxon>Tracheophyta</taxon>
        <taxon>Spermatophyta</taxon>
        <taxon>Magnoliopsida</taxon>
        <taxon>Ranunculales</taxon>
        <taxon>Berberidaceae</taxon>
        <taxon>Podophylloideae</taxon>
        <taxon>Podophylleae</taxon>
        <taxon>Sinopodophyllum</taxon>
    </lineage>
</organism>
<evidence type="ECO:0000250" key="1">
    <source>
        <dbReference type="UniProtKB" id="Q96242"/>
    </source>
</evidence>
<evidence type="ECO:0000255" key="2"/>
<evidence type="ECO:0000269" key="3">
    <source>
    </source>
</evidence>
<evidence type="ECO:0000269" key="4">
    <source>
    </source>
</evidence>
<evidence type="ECO:0000303" key="5">
    <source>
    </source>
</evidence>
<evidence type="ECO:0000303" key="6">
    <source>
    </source>
</evidence>
<evidence type="ECO:0000305" key="7"/>
<evidence type="ECO:0000305" key="8">
    <source>
    </source>
</evidence>
<sequence>MEMEMSVLAMSSTLILALAMALIFLFKAKSSSAIKWPPGPKTLPIIGNLHQLGGDELHIVLAKLARVHGAIMTIWMAKKPVIVVSDVNSVWEVLVSKSSDYAARDAAEISKIVSASSHSINTSDSGPYWQTLRRGLTHGPLGPLNISAQIPIQQRDMQRVIREMQQDAAANGGIIKPLDHLKRSSTRLVSRLIFGDTFDNDPYNDSMHEVVQDLNRFGGIALLEQAFSFAKHLPSYKRGVKEFHIHKRKIDDLVRPVVASANPPSNSYLGFLQSQNYSEEIIIACIFELYLLAMDSSASTATWALAFMIRDQQVQEKLYQDIKRVIGDGVDLVKAEDLSKMHYLQAVVKETMRMKPIAPLAIPHKTAIDTTVMGTKVPKGTCVMVNLYALHHDESVWAKPYTFMPERFLQGEDGKSVTEQAFLPFGAGMRICGGMEVGKLQFSLALANLVNAFKWTSAAEGKLPDMSDELQFITVMKTPLEARIIPRNP</sequence>
<accession>L7T8H2</accession>
<comment type="function">
    <text evidence="3 4">Cytochrome P450 involved in the biosynthesis of etoposide, a chemotherapeutic compound of the topoisomerase inhibitor family (PubMed:23161544, PubMed:26359402). Catalyzes the conversion of matairesinol to pluviatolide (PubMed:23161544, PubMed:26359402).</text>
</comment>
<comment type="catalytic activity">
    <reaction evidence="3 4">
        <text>(-)-matairesinol + reduced [NADPH--hemoprotein reductase] + O2 = (-)-pluviatolide + oxidized [NADPH--hemoprotein reductase] + 2 H2O + H(+)</text>
        <dbReference type="Rhea" id="RHEA:49084"/>
        <dbReference type="Rhea" id="RHEA-COMP:11964"/>
        <dbReference type="Rhea" id="RHEA-COMP:11965"/>
        <dbReference type="ChEBI" id="CHEBI:6698"/>
        <dbReference type="ChEBI" id="CHEBI:15377"/>
        <dbReference type="ChEBI" id="CHEBI:15378"/>
        <dbReference type="ChEBI" id="CHEBI:15379"/>
        <dbReference type="ChEBI" id="CHEBI:57618"/>
        <dbReference type="ChEBI" id="CHEBI:58210"/>
        <dbReference type="ChEBI" id="CHEBI:90896"/>
        <dbReference type="EC" id="1.14.19.72"/>
    </reaction>
    <physiologicalReaction direction="left-to-right" evidence="3 4">
        <dbReference type="Rhea" id="RHEA:49085"/>
    </physiologicalReaction>
</comment>
<comment type="cofactor">
    <cofactor evidence="1">
        <name>heme</name>
        <dbReference type="ChEBI" id="CHEBI:30413"/>
    </cofactor>
</comment>
<comment type="biophysicochemical properties">
    <kinetics>
        <KM evidence="3">9.7 uM for (-)-matairesinol</KM>
        <text evidence="3">kcat is 14.9 min(-1) with (-)-matairesinol as substrate.</text>
    </kinetics>
</comment>
<comment type="pathway">
    <text evidence="3 4">Aromatic compound metabolism; phenylpropanoid biosynthesis.</text>
</comment>
<comment type="subcellular location">
    <subcellularLocation>
        <location evidence="2">Membrane</location>
        <topology evidence="2">Single-pass membrane protein</topology>
    </subcellularLocation>
</comment>
<comment type="tissue specificity">
    <text evidence="4">Expressed in leaves, rhizomes and stems.</text>
</comment>
<comment type="induction">
    <text evidence="4">Transiently induced after wounding.</text>
</comment>
<comment type="biotechnology">
    <text evidence="8">Combinatorially expression of Sinopodophyllum hexandrum (mayapple) genes of the podophyllotoxin pathway (e.g. DIR, PLR, SDH, CYP719A23, OMT3, CYP71CU1, OMT1, 2-ODD, CYP71BE54 and CYP82D61) in Nicotiana benthamiana (tobacco) results in the production of the chemotherapeutic compound etoposide.</text>
</comment>
<comment type="similarity">
    <text evidence="7">Belongs to the cytochrome P450 family.</text>
</comment>
<protein>
    <recommendedName>
        <fullName evidence="5">Pluviatolide synthase</fullName>
        <ecNumber evidence="3 4">1.14.19.72</ecNumber>
    </recommendedName>
    <alternativeName>
        <fullName evidence="5">Cytochrome P450 family 719 subfamily A polypeptide 23</fullName>
    </alternativeName>
</protein>
<proteinExistence type="evidence at protein level"/>
<dbReference type="EC" id="1.14.19.72" evidence="3 4"/>
<dbReference type="EMBL" id="KC110997">
    <property type="protein sequence ID" value="AGC29953.1"/>
    <property type="molecule type" value="mRNA"/>
</dbReference>
<dbReference type="SMR" id="L7T8H2"/>
<dbReference type="KEGG" id="ag:AGC29953"/>
<dbReference type="BioCyc" id="MetaCyc:MONOMER-19147"/>
<dbReference type="BRENDA" id="1.14.19.72">
    <property type="organism ID" value="4928"/>
</dbReference>
<dbReference type="UniPathway" id="UPA00711"/>
<dbReference type="GO" id="GO:0016020">
    <property type="term" value="C:membrane"/>
    <property type="evidence" value="ECO:0007669"/>
    <property type="project" value="UniProtKB-SubCell"/>
</dbReference>
<dbReference type="GO" id="GO:0020037">
    <property type="term" value="F:heme binding"/>
    <property type="evidence" value="ECO:0007669"/>
    <property type="project" value="InterPro"/>
</dbReference>
<dbReference type="GO" id="GO:0005506">
    <property type="term" value="F:iron ion binding"/>
    <property type="evidence" value="ECO:0007669"/>
    <property type="project" value="InterPro"/>
</dbReference>
<dbReference type="GO" id="GO:0004497">
    <property type="term" value="F:monooxygenase activity"/>
    <property type="evidence" value="ECO:0007669"/>
    <property type="project" value="InterPro"/>
</dbReference>
<dbReference type="GO" id="GO:0016705">
    <property type="term" value="F:oxidoreductase activity, acting on paired donors, with incorporation or reduction of molecular oxygen"/>
    <property type="evidence" value="ECO:0000314"/>
    <property type="project" value="UniProtKB"/>
</dbReference>
<dbReference type="GO" id="GO:0009699">
    <property type="term" value="P:phenylpropanoid biosynthetic process"/>
    <property type="evidence" value="ECO:0000314"/>
    <property type="project" value="UniProtKB"/>
</dbReference>
<dbReference type="GO" id="GO:0009611">
    <property type="term" value="P:response to wounding"/>
    <property type="evidence" value="ECO:0000270"/>
    <property type="project" value="UniProtKB"/>
</dbReference>
<dbReference type="Gene3D" id="1.10.630.10">
    <property type="entry name" value="Cytochrome P450"/>
    <property type="match status" value="1"/>
</dbReference>
<dbReference type="InterPro" id="IPR001128">
    <property type="entry name" value="Cyt_P450"/>
</dbReference>
<dbReference type="InterPro" id="IPR002401">
    <property type="entry name" value="Cyt_P450_E_grp-I"/>
</dbReference>
<dbReference type="InterPro" id="IPR036396">
    <property type="entry name" value="Cyt_P450_sf"/>
</dbReference>
<dbReference type="PANTHER" id="PTHR47944">
    <property type="entry name" value="CYTOCHROME P450 98A9"/>
    <property type="match status" value="1"/>
</dbReference>
<dbReference type="PANTHER" id="PTHR47944:SF4">
    <property type="entry name" value="OS09G0441700 PROTEIN"/>
    <property type="match status" value="1"/>
</dbReference>
<dbReference type="Pfam" id="PF00067">
    <property type="entry name" value="p450"/>
    <property type="match status" value="1"/>
</dbReference>
<dbReference type="PRINTS" id="PR00463">
    <property type="entry name" value="EP450I"/>
</dbReference>
<dbReference type="PRINTS" id="PR00385">
    <property type="entry name" value="P450"/>
</dbReference>
<dbReference type="SUPFAM" id="SSF48264">
    <property type="entry name" value="Cytochrome P450"/>
    <property type="match status" value="1"/>
</dbReference>
<gene>
    <name evidence="5" type="primary">CYP719A23</name>
    <name evidence="6" type="synonym">Phex30934</name>
</gene>
<reference key="1">
    <citation type="journal article" date="2013" name="J. Biol. Chem.">
        <title>Next generation sequencing in predicting gene function in podophyllotoxin biosynthesis.</title>
        <authorList>
            <person name="Marques J.V."/>
            <person name="Kim K.-W."/>
            <person name="Lee C."/>
            <person name="Costa M.A."/>
            <person name="May G.D."/>
            <person name="Crow J.A."/>
            <person name="Davin L.B."/>
            <person name="Lewis N.G."/>
        </authorList>
    </citation>
    <scope>NUCLEOTIDE SEQUENCE [MRNA]</scope>
    <scope>FUNCTION</scope>
    <scope>CATALYTIC ACTIVITY</scope>
    <scope>BIOTECHNOLOGY</scope>
    <scope>PATHWAY</scope>
    <scope>BIOPHYSICOCHEMICAL PROPERTIES</scope>
</reference>
<reference key="2">
    <citation type="journal article" date="2015" name="Science">
        <title>Six enzymes from mayapple that complete the biosynthetic pathway to the etoposide aglycone.</title>
        <authorList>
            <person name="Lau W."/>
            <person name="Sattely E.S."/>
        </authorList>
    </citation>
    <scope>FUNCTION</scope>
    <scope>CATALYTIC ACTIVITY</scope>
    <scope>BIOTECHNOLOGY</scope>
    <scope>TISSUE SPECIFICITY</scope>
    <scope>INDUCTION BY WOUNDING</scope>
    <scope>PATHWAY</scope>
</reference>